<accession>B7UJE2</accession>
<protein>
    <recommendedName>
        <fullName>HTH-type transcriptional regulator EcpR</fullName>
    </recommendedName>
</protein>
<name>ECPR_ECO27</name>
<comment type="function">
    <text evidence="1 3">Part of the ecpRABCDE operon, which encodes the E.coli common pilus (ECP). ECP is found in both commensal and pathogenic strains and plays a dual role in early-stage biofilm development and host cell recognition (By similarity). Positively regulates the expression of the ecp operon by binding to two TTCCT boxes.</text>
</comment>
<comment type="subcellular location">
    <subcellularLocation>
        <location evidence="4">Cytoplasm</location>
    </subcellularLocation>
</comment>
<comment type="induction">
    <text evidence="3">Negatively regulated by H-NS. Positively autoregulated. Also positively regulated by IHF.</text>
</comment>
<comment type="similarity">
    <text evidence="4">Belongs to the EcpR/MatA family.</text>
</comment>
<gene>
    <name type="primary">ecpR</name>
    <name type="ordered locus">E2348C_0250</name>
</gene>
<organism>
    <name type="scientific">Escherichia coli O127:H6 (strain E2348/69 / EPEC)</name>
    <dbReference type="NCBI Taxonomy" id="574521"/>
    <lineage>
        <taxon>Bacteria</taxon>
        <taxon>Pseudomonadati</taxon>
        <taxon>Pseudomonadota</taxon>
        <taxon>Gammaproteobacteria</taxon>
        <taxon>Enterobacterales</taxon>
        <taxon>Enterobacteriaceae</taxon>
        <taxon>Escherichia</taxon>
    </lineage>
</organism>
<feature type="chain" id="PRO_0000429480" description="HTH-type transcriptional regulator EcpR">
    <location>
        <begin position="1"/>
        <end position="196"/>
    </location>
</feature>
<feature type="domain" description="HTH luxR-type" evidence="2">
    <location>
        <begin position="138"/>
        <end position="196"/>
    </location>
</feature>
<feature type="DNA-binding region" description="H-T-H motif" evidence="2">
    <location>
        <begin position="162"/>
        <end position="181"/>
    </location>
</feature>
<feature type="mutagenesis site" description="Decrease in activity." evidence="3">
    <original>D</original>
    <variation>A</variation>
    <location>
        <position position="60"/>
    </location>
</feature>
<feature type="mutagenesis site" description="Decrease in activity." evidence="3">
    <original>G</original>
    <variation>A</variation>
    <location>
        <position position="159"/>
    </location>
</feature>
<feature type="mutagenesis site" description="Decrease in activity." evidence="3">
    <original>T</original>
    <variation>A</variation>
    <location>
        <position position="175"/>
    </location>
</feature>
<feature type="mutagenesis site" description="Lack of activity." evidence="3">
    <original>V</original>
    <variation>A</variation>
    <location>
        <position position="176"/>
    </location>
</feature>
<feature type="mutagenesis site" description="Lack of activity." evidence="3">
    <original>K</original>
    <variation>A</variation>
    <location>
        <position position="186"/>
    </location>
</feature>
<keyword id="KW-0010">Activator</keyword>
<keyword id="KW-0963">Cytoplasm</keyword>
<keyword id="KW-0238">DNA-binding</keyword>
<keyword id="KW-1185">Reference proteome</keyword>
<keyword id="KW-0804">Transcription</keyword>
<keyword id="KW-0805">Transcription regulation</keyword>
<proteinExistence type="evidence at protein level"/>
<dbReference type="EMBL" id="FM180568">
    <property type="protein sequence ID" value="CAS07798.1"/>
    <property type="molecule type" value="Genomic_DNA"/>
</dbReference>
<dbReference type="SMR" id="B7UJE2"/>
<dbReference type="KEGG" id="ecg:E2348C_0250"/>
<dbReference type="HOGENOM" id="CLU_128111_0_0_6"/>
<dbReference type="Proteomes" id="UP000008205">
    <property type="component" value="Chromosome"/>
</dbReference>
<dbReference type="GO" id="GO:0005737">
    <property type="term" value="C:cytoplasm"/>
    <property type="evidence" value="ECO:0007669"/>
    <property type="project" value="UniProtKB-SubCell"/>
</dbReference>
<dbReference type="GO" id="GO:0003677">
    <property type="term" value="F:DNA binding"/>
    <property type="evidence" value="ECO:0007669"/>
    <property type="project" value="UniProtKB-KW"/>
</dbReference>
<dbReference type="GO" id="GO:2000144">
    <property type="term" value="P:positive regulation of DNA-templated transcription initiation"/>
    <property type="evidence" value="ECO:0000315"/>
    <property type="project" value="CACAO"/>
</dbReference>
<dbReference type="CDD" id="cd06170">
    <property type="entry name" value="LuxR_C_like"/>
    <property type="match status" value="1"/>
</dbReference>
<dbReference type="Gene3D" id="1.10.10.10">
    <property type="entry name" value="Winged helix-like DNA-binding domain superfamily/Winged helix DNA-binding domain"/>
    <property type="match status" value="1"/>
</dbReference>
<dbReference type="InterPro" id="IPR016032">
    <property type="entry name" value="Sig_transdc_resp-reg_C-effctor"/>
</dbReference>
<dbReference type="InterPro" id="IPR000792">
    <property type="entry name" value="Tscrpt_reg_LuxR_C"/>
</dbReference>
<dbReference type="InterPro" id="IPR036388">
    <property type="entry name" value="WH-like_DNA-bd_sf"/>
</dbReference>
<dbReference type="Pfam" id="PF00196">
    <property type="entry name" value="GerE"/>
    <property type="match status" value="1"/>
</dbReference>
<dbReference type="PRINTS" id="PR00038">
    <property type="entry name" value="HTHLUXR"/>
</dbReference>
<dbReference type="SMART" id="SM00421">
    <property type="entry name" value="HTH_LUXR"/>
    <property type="match status" value="1"/>
</dbReference>
<dbReference type="SUPFAM" id="SSF46894">
    <property type="entry name" value="C-terminal effector domain of the bipartite response regulators"/>
    <property type="match status" value="1"/>
</dbReference>
<dbReference type="PROSITE" id="PS50043">
    <property type="entry name" value="HTH_LUXR_2"/>
    <property type="match status" value="1"/>
</dbReference>
<sequence length="196" mass="23299">MTWQNDYSRDYEVKNHMECQNRSDKYIWSPHDAYFYKGLSELIVDIDRLIYLSLEKIRKDFVFINLNTDSLTEFINRDNEWLSAVKGKQVVLIAARKSEALANYWYYNSNIRGVVYAGLSRDIRKELAYVINGRFLRKDIKKDKITDREMEIIRMTAQGMLPKSIARIENCSVKTVYTHRRNAEAKLYSKLYKLVQ</sequence>
<evidence type="ECO:0000250" key="1"/>
<evidence type="ECO:0000255" key="2">
    <source>
        <dbReference type="PROSITE-ProRule" id="PRU00411"/>
    </source>
</evidence>
<evidence type="ECO:0000269" key="3">
    <source>
    </source>
</evidence>
<evidence type="ECO:0000305" key="4"/>
<reference key="1">
    <citation type="journal article" date="2009" name="J. Bacteriol.">
        <title>Complete genome sequence and comparative genome analysis of enteropathogenic Escherichia coli O127:H6 strain E2348/69.</title>
        <authorList>
            <person name="Iguchi A."/>
            <person name="Thomson N.R."/>
            <person name="Ogura Y."/>
            <person name="Saunders D."/>
            <person name="Ooka T."/>
            <person name="Henderson I.R."/>
            <person name="Harris D."/>
            <person name="Asadulghani M."/>
            <person name="Kurokawa K."/>
            <person name="Dean P."/>
            <person name="Kenny B."/>
            <person name="Quail M.A."/>
            <person name="Thurston S."/>
            <person name="Dougan G."/>
            <person name="Hayashi T."/>
            <person name="Parkhill J."/>
            <person name="Frankel G."/>
        </authorList>
    </citation>
    <scope>NUCLEOTIDE SEQUENCE [LARGE SCALE GENOMIC DNA]</scope>
    <source>
        <strain>E2348/69 / EPEC</strain>
    </source>
</reference>
<reference key="2">
    <citation type="journal article" date="2012" name="J. Bacteriol.">
        <title>Transcriptional regulation of the ecp operon by EcpR, IHF, and H-NS in attaching and effacing Escherichia coli.</title>
        <authorList>
            <person name="Martinez-Santos V.I."/>
            <person name="Medrano-Lopez A."/>
            <person name="Saldana Z."/>
            <person name="Giron J.A."/>
            <person name="Puente J.L."/>
        </authorList>
    </citation>
    <scope>FUNCTION</scope>
    <scope>DNA-BINDING</scope>
    <scope>INDUCTION</scope>
    <scope>MUTAGENESIS OF ASP-60; GLY-159; THR-175; VAL-176 AND LYS-186</scope>
    <source>
        <strain>E2348/69 / EPEC</strain>
    </source>
</reference>